<reference key="1">
    <citation type="journal article" date="2006" name="Mol. Microbiol.">
        <title>Role of pathogenicity island-associated integrases in the genome plasticity of uropathogenic Escherichia coli strain 536.</title>
        <authorList>
            <person name="Hochhut B."/>
            <person name="Wilde C."/>
            <person name="Balling G."/>
            <person name="Middendorf B."/>
            <person name="Dobrindt U."/>
            <person name="Brzuszkiewicz E."/>
            <person name="Gottschalk G."/>
            <person name="Carniel E."/>
            <person name="Hacker J."/>
        </authorList>
    </citation>
    <scope>NUCLEOTIDE SEQUENCE [LARGE SCALE GENOMIC DNA]</scope>
    <source>
        <strain>536 / UPEC</strain>
    </source>
</reference>
<reference key="2">
    <citation type="journal article" date="2006" name="J. Bacteriol.">
        <title>The transcriptional antiterminator RfaH represses biofilm formation in Escherichia coli.</title>
        <authorList>
            <person name="Beloin C."/>
            <person name="Michaelis K."/>
            <person name="Lindner K."/>
            <person name="Landini P."/>
            <person name="Hacker J."/>
            <person name="Ghigo J.M."/>
            <person name="Dobrindt U."/>
        </authorList>
    </citation>
    <scope>FUNCTION IN BIOFILM FORMATION</scope>
    <scope>DISRUPTION PHENOTYPE</scope>
    <source>
        <strain>536 / UPEC</strain>
    </source>
</reference>
<sequence>MQSWYLLYCKRGQLQRAQEHLERQAVNCLAPMITLEKIVRGKRTAVSEPLFPNYLFVEFDPEVIHTTTINATRGVSHFVRFGASPAIVPSAVIHQLSVYKPKDIVDPSTPYPGDKVIITEGAFEGFQAIFTEPDGEARSMLLLNLINKEIKHSVKNTEFRKL</sequence>
<comment type="function">
    <text evidence="1 2">Enhances distal genes transcription elongation in a specialized subset of operons that encode extracytoplasmic components. RfaH is recruited into a multi-component RNA polymerase complex by the ops element, which is a short conserved DNA sequence located downstream of the main promoter of these operons. Once bound, RfaH suppresses pausing and inhibits Rho-dependent and intrinsic termination at a subset of sites. Termination signals are bypassed, which allows complete synthesis of long RNA chains (By similarity). Also negatively controls expression and surface presentation of AG43 and possibly another AG43-independent factor that mediates cell-cell interactions and biofilm formation,.</text>
</comment>
<comment type="subunit">
    <text evidence="1">Interacts with both the nontemplate DNA and the RNA polymerase (RNAP).</text>
</comment>
<comment type="disruption phenotype">
    <text evidence="2">Inactivation results in increased initial adhesion and biofilm formation.</text>
</comment>
<comment type="similarity">
    <text evidence="1">Belongs to the RfaH family.</text>
</comment>
<feature type="chain" id="PRO_0000422181" description="Transcription antitermination protein RfaH">
    <location>
        <begin position="1"/>
        <end position="162"/>
    </location>
</feature>
<organism>
    <name type="scientific">Escherichia coli O6:K15:H31 (strain 536 / UPEC)</name>
    <dbReference type="NCBI Taxonomy" id="362663"/>
    <lineage>
        <taxon>Bacteria</taxon>
        <taxon>Pseudomonadati</taxon>
        <taxon>Pseudomonadota</taxon>
        <taxon>Gammaproteobacteria</taxon>
        <taxon>Enterobacterales</taxon>
        <taxon>Enterobacteriaceae</taxon>
        <taxon>Escherichia</taxon>
    </lineage>
</organism>
<evidence type="ECO:0000255" key="1">
    <source>
        <dbReference type="HAMAP-Rule" id="MF_00951"/>
    </source>
</evidence>
<evidence type="ECO:0000269" key="2">
    <source>
    </source>
</evidence>
<dbReference type="EMBL" id="CP000247">
    <property type="protein sequence ID" value="ABG72015.1"/>
    <property type="molecule type" value="Genomic_DNA"/>
</dbReference>
<dbReference type="RefSeq" id="WP_001192400.1">
    <property type="nucleotide sequence ID" value="NC_008253.1"/>
</dbReference>
<dbReference type="BMRB" id="Q0TAL4"/>
<dbReference type="SMR" id="Q0TAL4"/>
<dbReference type="KEGG" id="ecp:ECP_4055"/>
<dbReference type="HOGENOM" id="CLU_067287_5_0_6"/>
<dbReference type="Proteomes" id="UP000009182">
    <property type="component" value="Chromosome"/>
</dbReference>
<dbReference type="GO" id="GO:0005829">
    <property type="term" value="C:cytosol"/>
    <property type="evidence" value="ECO:0007669"/>
    <property type="project" value="TreeGrafter"/>
</dbReference>
<dbReference type="GO" id="GO:0003677">
    <property type="term" value="F:DNA binding"/>
    <property type="evidence" value="ECO:0007669"/>
    <property type="project" value="UniProtKB-UniRule"/>
</dbReference>
<dbReference type="GO" id="GO:0001073">
    <property type="term" value="F:transcription antitermination factor activity, DNA binding"/>
    <property type="evidence" value="ECO:0007669"/>
    <property type="project" value="UniProtKB-UniRule"/>
</dbReference>
<dbReference type="GO" id="GO:0140673">
    <property type="term" value="P:transcription elongation-coupled chromatin remodeling"/>
    <property type="evidence" value="ECO:0007669"/>
    <property type="project" value="InterPro"/>
</dbReference>
<dbReference type="CDD" id="cd09892">
    <property type="entry name" value="NGN_SP_RfaH"/>
    <property type="match status" value="1"/>
</dbReference>
<dbReference type="FunFam" id="3.30.70.940:FF:000004">
    <property type="entry name" value="Transcription antitermination protein RfaH"/>
    <property type="match status" value="1"/>
</dbReference>
<dbReference type="Gene3D" id="3.30.70.940">
    <property type="entry name" value="NusG, N-terminal domain"/>
    <property type="match status" value="1"/>
</dbReference>
<dbReference type="HAMAP" id="MF_00951">
    <property type="entry name" value="RfaH"/>
    <property type="match status" value="1"/>
</dbReference>
<dbReference type="InterPro" id="IPR006645">
    <property type="entry name" value="NGN-like_dom"/>
</dbReference>
<dbReference type="InterPro" id="IPR036735">
    <property type="entry name" value="NGN_dom_sf"/>
</dbReference>
<dbReference type="InterPro" id="IPR043425">
    <property type="entry name" value="NusG-like"/>
</dbReference>
<dbReference type="InterPro" id="IPR010215">
    <property type="entry name" value="Transcription_antiterm_RfaH"/>
</dbReference>
<dbReference type="NCBIfam" id="NF006534">
    <property type="entry name" value="PRK09014.1"/>
    <property type="match status" value="1"/>
</dbReference>
<dbReference type="NCBIfam" id="TIGR01955">
    <property type="entry name" value="RfaH"/>
    <property type="match status" value="1"/>
</dbReference>
<dbReference type="PANTHER" id="PTHR30265">
    <property type="entry name" value="RHO-INTERACTING TRANSCRIPTION TERMINATION FACTOR NUSG"/>
    <property type="match status" value="1"/>
</dbReference>
<dbReference type="PANTHER" id="PTHR30265:SF7">
    <property type="entry name" value="TRANSCRIPTION ANTITERMINATION PROTEIN RFAH"/>
    <property type="match status" value="1"/>
</dbReference>
<dbReference type="Pfam" id="PF02357">
    <property type="entry name" value="NusG"/>
    <property type="match status" value="1"/>
</dbReference>
<dbReference type="SMART" id="SM00738">
    <property type="entry name" value="NGN"/>
    <property type="match status" value="1"/>
</dbReference>
<dbReference type="SUPFAM" id="SSF82679">
    <property type="entry name" value="N-utilization substance G protein NusG, N-terminal domain"/>
    <property type="match status" value="1"/>
</dbReference>
<keyword id="KW-0238">DNA-binding</keyword>
<keyword id="KW-0804">Transcription</keyword>
<keyword id="KW-0889">Transcription antitermination</keyword>
<keyword id="KW-0805">Transcription regulation</keyword>
<protein>
    <recommendedName>
        <fullName evidence="1">Transcription antitermination protein RfaH</fullName>
    </recommendedName>
</protein>
<proteinExistence type="evidence at protein level"/>
<gene>
    <name evidence="1" type="primary">rfaH</name>
    <name type="ordered locus">ECP_4055</name>
</gene>
<accession>Q0TAL4</accession>
<name>RFAH_ECOL5</name>